<accession>Q58886</accession>
<comment type="subcellular location">
    <subcellularLocation>
        <location evidence="2">Cell membrane</location>
        <topology evidence="2">Multi-pass membrane protein</topology>
    </subcellularLocation>
</comment>
<name>Y1491_METJA</name>
<organism>
    <name type="scientific">Methanocaldococcus jannaschii (strain ATCC 43067 / DSM 2661 / JAL-1 / JCM 10045 / NBRC 100440)</name>
    <name type="common">Methanococcus jannaschii</name>
    <dbReference type="NCBI Taxonomy" id="243232"/>
    <lineage>
        <taxon>Archaea</taxon>
        <taxon>Methanobacteriati</taxon>
        <taxon>Methanobacteriota</taxon>
        <taxon>Methanomada group</taxon>
        <taxon>Methanococci</taxon>
        <taxon>Methanococcales</taxon>
        <taxon>Methanocaldococcaceae</taxon>
        <taxon>Methanocaldococcus</taxon>
    </lineage>
</organism>
<dbReference type="EMBL" id="L77117">
    <property type="protein sequence ID" value="AAB99510.1"/>
    <property type="molecule type" value="Genomic_DNA"/>
</dbReference>
<dbReference type="PIR" id="B64486">
    <property type="entry name" value="B64486"/>
</dbReference>
<dbReference type="STRING" id="243232.MJ_1491"/>
<dbReference type="PaxDb" id="243232-MJ_1491"/>
<dbReference type="EnsemblBacteria" id="AAB99510">
    <property type="protein sequence ID" value="AAB99510"/>
    <property type="gene ID" value="MJ_1491"/>
</dbReference>
<dbReference type="KEGG" id="mja:MJ_1491"/>
<dbReference type="eggNOG" id="arCOG04907">
    <property type="taxonomic scope" value="Archaea"/>
</dbReference>
<dbReference type="HOGENOM" id="CLU_151706_0_0_2"/>
<dbReference type="InParanoid" id="Q58886"/>
<dbReference type="Proteomes" id="UP000000805">
    <property type="component" value="Chromosome"/>
</dbReference>
<dbReference type="GO" id="GO:0005886">
    <property type="term" value="C:plasma membrane"/>
    <property type="evidence" value="ECO:0007669"/>
    <property type="project" value="UniProtKB-SubCell"/>
</dbReference>
<reference key="1">
    <citation type="journal article" date="1996" name="Science">
        <title>Complete genome sequence of the methanogenic archaeon, Methanococcus jannaschii.</title>
        <authorList>
            <person name="Bult C.J."/>
            <person name="White O."/>
            <person name="Olsen G.J."/>
            <person name="Zhou L."/>
            <person name="Fleischmann R.D."/>
            <person name="Sutton G.G."/>
            <person name="Blake J.A."/>
            <person name="FitzGerald L.M."/>
            <person name="Clayton R.A."/>
            <person name="Gocayne J.D."/>
            <person name="Kerlavage A.R."/>
            <person name="Dougherty B.A."/>
            <person name="Tomb J.-F."/>
            <person name="Adams M.D."/>
            <person name="Reich C.I."/>
            <person name="Overbeek R."/>
            <person name="Kirkness E.F."/>
            <person name="Weinstock K.G."/>
            <person name="Merrick J.M."/>
            <person name="Glodek A."/>
            <person name="Scott J.L."/>
            <person name="Geoghagen N.S.M."/>
            <person name="Weidman J.F."/>
            <person name="Fuhrmann J.L."/>
            <person name="Nguyen D."/>
            <person name="Utterback T.R."/>
            <person name="Kelley J.M."/>
            <person name="Peterson J.D."/>
            <person name="Sadow P.W."/>
            <person name="Hanna M.C."/>
            <person name="Cotton M.D."/>
            <person name="Roberts K.M."/>
            <person name="Hurst M.A."/>
            <person name="Kaine B.P."/>
            <person name="Borodovsky M."/>
            <person name="Klenk H.-P."/>
            <person name="Fraser C.M."/>
            <person name="Smith H.O."/>
            <person name="Woese C.R."/>
            <person name="Venter J.C."/>
        </authorList>
    </citation>
    <scope>NUCLEOTIDE SEQUENCE [LARGE SCALE GENOMIC DNA]</scope>
    <source>
        <strain>ATCC 43067 / DSM 2661 / JAL-1 / JCM 10045 / NBRC 100440</strain>
    </source>
</reference>
<keyword id="KW-1003">Cell membrane</keyword>
<keyword id="KW-0472">Membrane</keyword>
<keyword id="KW-1185">Reference proteome</keyword>
<keyword id="KW-0812">Transmembrane</keyword>
<keyword id="KW-1133">Transmembrane helix</keyword>
<protein>
    <recommendedName>
        <fullName>Uncharacterized protein MJ1491</fullName>
    </recommendedName>
</protein>
<sequence length="127" mass="13006">MKYMVSFDQERMLKPAVIGGIINGILGAICCLCYVIGGAVAAHLYVNAGGICDYENCGLVGAISGVIGGVIASILSFLFMSAYLSALGLKAAMFTGASFIIGFITAIIFGAILGAVGGVIYVVIKNR</sequence>
<evidence type="ECO:0000255" key="1"/>
<evidence type="ECO:0000305" key="2"/>
<feature type="chain" id="PRO_0000107374" description="Uncharacterized protein MJ1491">
    <location>
        <begin position="1"/>
        <end position="127"/>
    </location>
</feature>
<feature type="transmembrane region" description="Helical" evidence="1">
    <location>
        <begin position="16"/>
        <end position="36"/>
    </location>
</feature>
<feature type="transmembrane region" description="Helical" evidence="1">
    <location>
        <begin position="59"/>
        <end position="79"/>
    </location>
</feature>
<feature type="transmembrane region" description="Helical" evidence="1">
    <location>
        <begin position="100"/>
        <end position="120"/>
    </location>
</feature>
<proteinExistence type="predicted"/>
<gene>
    <name type="ordered locus">MJ1491</name>
</gene>